<sequence length="85" mass="9788">MSDGQKTKTTVDIYGQQFTIVGDESKSHMRHVASIVDDKMREINEKNPYLDINKLAVLTAVNVVHDYLKLKEELERLKGQIKEKD</sequence>
<name>ZAPA_BACLD</name>
<reference key="1">
    <citation type="journal article" date="2004" name="J. Mol. Microbiol. Biotechnol.">
        <title>The complete genome sequence of Bacillus licheniformis DSM13, an organism with great industrial potential.</title>
        <authorList>
            <person name="Veith B."/>
            <person name="Herzberg C."/>
            <person name="Steckel S."/>
            <person name="Feesche J."/>
            <person name="Maurer K.H."/>
            <person name="Ehrenreich P."/>
            <person name="Baeumer S."/>
            <person name="Henne A."/>
            <person name="Liesegang H."/>
            <person name="Merkl R."/>
            <person name="Ehrenreich A."/>
            <person name="Gottschalk G."/>
        </authorList>
    </citation>
    <scope>NUCLEOTIDE SEQUENCE [LARGE SCALE GENOMIC DNA]</scope>
    <source>
        <strain>ATCC 14580 / DSM 13 / JCM 2505 / CCUG 7422 / NBRC 12200 / NCIMB 9375 / NCTC 10341 / NRRL NRS-1264 / Gibson 46</strain>
    </source>
</reference>
<reference key="2">
    <citation type="journal article" date="2004" name="Genome Biol.">
        <title>Complete genome sequence of the industrial bacterium Bacillus licheniformis and comparisons with closely related Bacillus species.</title>
        <authorList>
            <person name="Rey M.W."/>
            <person name="Ramaiya P."/>
            <person name="Nelson B.A."/>
            <person name="Brody-Karpin S.D."/>
            <person name="Zaretsky E.J."/>
            <person name="Tang M."/>
            <person name="Lopez de Leon A."/>
            <person name="Xiang H."/>
            <person name="Gusti V."/>
            <person name="Clausen I.G."/>
            <person name="Olsen P.B."/>
            <person name="Rasmussen M.D."/>
            <person name="Andersen J.T."/>
            <person name="Joergensen P.L."/>
            <person name="Larsen T.S."/>
            <person name="Sorokin A."/>
            <person name="Bolotin A."/>
            <person name="Lapidus A."/>
            <person name="Galleron N."/>
            <person name="Ehrlich S.D."/>
            <person name="Berka R.M."/>
        </authorList>
    </citation>
    <scope>NUCLEOTIDE SEQUENCE [LARGE SCALE GENOMIC DNA]</scope>
    <source>
        <strain>ATCC 14580 / DSM 13 / JCM 2505 / CCUG 7422 / NBRC 12200 / NCIMB 9375 / NCTC 10341 / NRRL NRS-1264 / Gibson 46</strain>
    </source>
</reference>
<organism>
    <name type="scientific">Bacillus licheniformis (strain ATCC 14580 / DSM 13 / JCM 2505 / CCUG 7422 / NBRC 12200 / NCIMB 9375 / NCTC 10341 / NRRL NRS-1264 / Gibson 46)</name>
    <dbReference type="NCBI Taxonomy" id="279010"/>
    <lineage>
        <taxon>Bacteria</taxon>
        <taxon>Bacillati</taxon>
        <taxon>Bacillota</taxon>
        <taxon>Bacilli</taxon>
        <taxon>Bacillales</taxon>
        <taxon>Bacillaceae</taxon>
        <taxon>Bacillus</taxon>
    </lineage>
</organism>
<proteinExistence type="inferred from homology"/>
<evidence type="ECO:0000255" key="1">
    <source>
        <dbReference type="HAMAP-Rule" id="MF_02013"/>
    </source>
</evidence>
<accession>Q65GD9</accession>
<accession>Q62RU5</accession>
<protein>
    <recommendedName>
        <fullName evidence="1">Cell division protein ZapA</fullName>
    </recommendedName>
    <alternativeName>
        <fullName evidence="1">Z ring-associated protein ZapA</fullName>
    </alternativeName>
</protein>
<gene>
    <name evidence="1" type="primary">zapA</name>
    <name type="ordered locus">BLi03008</name>
    <name type="ordered locus">BL00337</name>
</gene>
<feature type="chain" id="PRO_0000345684" description="Cell division protein ZapA">
    <location>
        <begin position="1"/>
        <end position="85"/>
    </location>
</feature>
<feature type="coiled-coil region" evidence="1">
    <location>
        <begin position="60"/>
        <end position="85"/>
    </location>
</feature>
<comment type="function">
    <text evidence="1">Activator of cell division through the inhibition of FtsZ GTPase activity, therefore promoting FtsZ assembly into bundles of protofilaments necessary for the formation of the division Z ring. It is recruited early at mid-cell but it is not essential for cell division.</text>
</comment>
<comment type="subunit">
    <text evidence="1">Homodimer. Interacts with FtsZ.</text>
</comment>
<comment type="subcellular location">
    <subcellularLocation>
        <location evidence="1">Cytoplasm</location>
    </subcellularLocation>
    <text evidence="1">Localizes at mid-cell. In sporulating cells, localizes near the cell poles.</text>
</comment>
<comment type="similarity">
    <text evidence="1">Belongs to the ZapA family. Type 2 subfamily.</text>
</comment>
<dbReference type="EMBL" id="CP000002">
    <property type="protein sequence ID" value="AAU24515.2"/>
    <property type="molecule type" value="Genomic_DNA"/>
</dbReference>
<dbReference type="EMBL" id="AE017333">
    <property type="protein sequence ID" value="AAU41875.1"/>
    <property type="molecule type" value="Genomic_DNA"/>
</dbReference>
<dbReference type="RefSeq" id="WP_003184205.1">
    <property type="nucleotide sequence ID" value="NC_006322.1"/>
</dbReference>
<dbReference type="SMR" id="Q65GD9"/>
<dbReference type="STRING" id="279010.BL00337"/>
<dbReference type="GeneID" id="92860400"/>
<dbReference type="KEGG" id="bld:BLi03008"/>
<dbReference type="KEGG" id="bli:BL00337"/>
<dbReference type="eggNOG" id="COG3027">
    <property type="taxonomic scope" value="Bacteria"/>
</dbReference>
<dbReference type="HOGENOM" id="CLU_116623_4_0_9"/>
<dbReference type="Proteomes" id="UP000000606">
    <property type="component" value="Chromosome"/>
</dbReference>
<dbReference type="GO" id="GO:0032153">
    <property type="term" value="C:cell division site"/>
    <property type="evidence" value="ECO:0007669"/>
    <property type="project" value="TreeGrafter"/>
</dbReference>
<dbReference type="GO" id="GO:0030428">
    <property type="term" value="C:cell septum"/>
    <property type="evidence" value="ECO:0007669"/>
    <property type="project" value="TreeGrafter"/>
</dbReference>
<dbReference type="GO" id="GO:0005829">
    <property type="term" value="C:cytosol"/>
    <property type="evidence" value="ECO:0007669"/>
    <property type="project" value="TreeGrafter"/>
</dbReference>
<dbReference type="GO" id="GO:0005886">
    <property type="term" value="C:plasma membrane"/>
    <property type="evidence" value="ECO:0007669"/>
    <property type="project" value="UniProtKB-UniRule"/>
</dbReference>
<dbReference type="GO" id="GO:0000917">
    <property type="term" value="P:division septum assembly"/>
    <property type="evidence" value="ECO:0007669"/>
    <property type="project" value="UniProtKB-KW"/>
</dbReference>
<dbReference type="GO" id="GO:0043093">
    <property type="term" value="P:FtsZ-dependent cytokinesis"/>
    <property type="evidence" value="ECO:0007669"/>
    <property type="project" value="TreeGrafter"/>
</dbReference>
<dbReference type="GO" id="GO:0000921">
    <property type="term" value="P:septin ring assembly"/>
    <property type="evidence" value="ECO:0007669"/>
    <property type="project" value="TreeGrafter"/>
</dbReference>
<dbReference type="Gene3D" id="6.10.250.790">
    <property type="match status" value="1"/>
</dbReference>
<dbReference type="HAMAP" id="MF_02013">
    <property type="entry name" value="ZapA_type2"/>
    <property type="match status" value="1"/>
</dbReference>
<dbReference type="InterPro" id="IPR053712">
    <property type="entry name" value="Bac_CellDiv_Activator"/>
</dbReference>
<dbReference type="InterPro" id="IPR007838">
    <property type="entry name" value="Cell_div_ZapA-like"/>
</dbReference>
<dbReference type="InterPro" id="IPR036192">
    <property type="entry name" value="Cell_div_ZapA-like_sf"/>
</dbReference>
<dbReference type="InterPro" id="IPR023688">
    <property type="entry name" value="Cell_div_ZapA_firmicutes"/>
</dbReference>
<dbReference type="NCBIfam" id="NF010724">
    <property type="entry name" value="PRK14126.1"/>
    <property type="match status" value="1"/>
</dbReference>
<dbReference type="PANTHER" id="PTHR34981">
    <property type="entry name" value="CELL DIVISION PROTEIN ZAPA"/>
    <property type="match status" value="1"/>
</dbReference>
<dbReference type="PANTHER" id="PTHR34981:SF1">
    <property type="entry name" value="CELL DIVISION PROTEIN ZAPA"/>
    <property type="match status" value="1"/>
</dbReference>
<dbReference type="Pfam" id="PF05164">
    <property type="entry name" value="ZapA"/>
    <property type="match status" value="1"/>
</dbReference>
<dbReference type="SUPFAM" id="SSF102829">
    <property type="entry name" value="Cell division protein ZapA-like"/>
    <property type="match status" value="1"/>
</dbReference>
<keyword id="KW-0131">Cell cycle</keyword>
<keyword id="KW-0132">Cell division</keyword>
<keyword id="KW-0175">Coiled coil</keyword>
<keyword id="KW-0963">Cytoplasm</keyword>
<keyword id="KW-1185">Reference proteome</keyword>
<keyword id="KW-0717">Septation</keyword>